<feature type="chain" id="PRO_0000117552" description="NADH-ubiquinone oxidoreductase chain 2">
    <location>
        <begin position="1" status="less than"/>
        <end position="136" status="greater than"/>
    </location>
</feature>
<feature type="transmembrane region" description="Helical" evidence="2">
    <location>
        <begin position="12"/>
        <end position="32"/>
    </location>
</feature>
<feature type="transmembrane region" description="Helical" evidence="2">
    <location>
        <begin position="34"/>
        <end position="54"/>
    </location>
</feature>
<feature type="transmembrane region" description="Helical" evidence="2">
    <location>
        <begin position="74"/>
        <end position="94"/>
    </location>
</feature>
<feature type="transmembrane region" description="Helical" evidence="2">
    <location>
        <begin position="99"/>
        <end position="119"/>
    </location>
</feature>
<feature type="non-consecutive residues" evidence="3">
    <location>
        <begin position="83"/>
        <end position="84"/>
    </location>
</feature>
<feature type="non-terminal residue">
    <location>
        <position position="1"/>
    </location>
</feature>
<feature type="non-terminal residue">
    <location>
        <position position="136"/>
    </location>
</feature>
<proteinExistence type="inferred from homology"/>
<gene>
    <name type="primary">ND2</name>
</gene>
<organism>
    <name type="scientific">Artemia salina</name>
    <name type="common">Brine shrimp</name>
    <dbReference type="NCBI Taxonomy" id="85549"/>
    <lineage>
        <taxon>Eukaryota</taxon>
        <taxon>Metazoa</taxon>
        <taxon>Ecdysozoa</taxon>
        <taxon>Arthropoda</taxon>
        <taxon>Crustacea</taxon>
        <taxon>Branchiopoda</taxon>
        <taxon>Anostraca</taxon>
        <taxon>Artemiidae</taxon>
        <taxon>Artemia</taxon>
    </lineage>
</organism>
<dbReference type="EC" id="7.1.1.2"/>
<dbReference type="EMBL" id="X07670">
    <property type="protein sequence ID" value="CAA30517.1"/>
    <property type="molecule type" value="Genomic_DNA"/>
</dbReference>
<dbReference type="EMBL" id="X07671">
    <property type="protein sequence ID" value="CAA30518.1"/>
    <property type="molecule type" value="Genomic_DNA"/>
</dbReference>
<dbReference type="SMR" id="P19042"/>
<dbReference type="GO" id="GO:0005743">
    <property type="term" value="C:mitochondrial inner membrane"/>
    <property type="evidence" value="ECO:0007669"/>
    <property type="project" value="UniProtKB-SubCell"/>
</dbReference>
<dbReference type="GO" id="GO:0008137">
    <property type="term" value="F:NADH dehydrogenase (ubiquinone) activity"/>
    <property type="evidence" value="ECO:0007669"/>
    <property type="project" value="UniProtKB-EC"/>
</dbReference>
<dbReference type="GO" id="GO:0006120">
    <property type="term" value="P:mitochondrial electron transport, NADH to ubiquinone"/>
    <property type="evidence" value="ECO:0007669"/>
    <property type="project" value="TreeGrafter"/>
</dbReference>
<dbReference type="InterPro" id="IPR050175">
    <property type="entry name" value="Complex_I_Subunit_2"/>
</dbReference>
<dbReference type="PANTHER" id="PTHR46552">
    <property type="entry name" value="NADH-UBIQUINONE OXIDOREDUCTASE CHAIN 2"/>
    <property type="match status" value="1"/>
</dbReference>
<dbReference type="PANTHER" id="PTHR46552:SF1">
    <property type="entry name" value="NADH-UBIQUINONE OXIDOREDUCTASE CHAIN 2"/>
    <property type="match status" value="1"/>
</dbReference>
<geneLocation type="mitochondrion"/>
<keyword id="KW-0249">Electron transport</keyword>
<keyword id="KW-0472">Membrane</keyword>
<keyword id="KW-0496">Mitochondrion</keyword>
<keyword id="KW-0999">Mitochondrion inner membrane</keyword>
<keyword id="KW-0520">NAD</keyword>
<keyword id="KW-0679">Respiratory chain</keyword>
<keyword id="KW-1278">Translocase</keyword>
<keyword id="KW-0812">Transmembrane</keyword>
<keyword id="KW-1133">Transmembrane helix</keyword>
<keyword id="KW-0813">Transport</keyword>
<keyword id="KW-0830">Ubiquinone</keyword>
<accession>P19042</accession>
<protein>
    <recommendedName>
        <fullName>NADH-ubiquinone oxidoreductase chain 2</fullName>
        <ecNumber>7.1.1.2</ecNumber>
    </recommendedName>
    <alternativeName>
        <fullName>NADH dehydrogenase subunit 2</fullName>
    </alternativeName>
</protein>
<evidence type="ECO:0000250" key="1"/>
<evidence type="ECO:0000255" key="2"/>
<evidence type="ECO:0000305" key="3"/>
<name>NU2M_ARTSA</name>
<reference key="1">
    <citation type="journal article" date="1988" name="Nucleic Acids Res.">
        <title>Genome organization of Artemia mitochondrial DNA.</title>
        <authorList>
            <person name="Batuecas B."/>
            <person name="Garesse R."/>
            <person name="Calleja M."/>
            <person name="Valverde J.R."/>
            <person name="Marco R."/>
        </authorList>
    </citation>
    <scope>NUCLEOTIDE SEQUENCE [GENOMIC DNA]</scope>
</reference>
<comment type="function">
    <text evidence="1">Core subunit of the mitochondrial membrane respiratory chain NADH dehydrogenase (Complex I) that is believed to belong to the minimal assembly required for catalysis. Complex I functions in the transfer of electrons from NADH to the respiratory chain. The immediate electron acceptor for the enzyme is believed to be ubiquinone (By similarity).</text>
</comment>
<comment type="catalytic activity">
    <reaction>
        <text>a ubiquinone + NADH + 5 H(+)(in) = a ubiquinol + NAD(+) + 4 H(+)(out)</text>
        <dbReference type="Rhea" id="RHEA:29091"/>
        <dbReference type="Rhea" id="RHEA-COMP:9565"/>
        <dbReference type="Rhea" id="RHEA-COMP:9566"/>
        <dbReference type="ChEBI" id="CHEBI:15378"/>
        <dbReference type="ChEBI" id="CHEBI:16389"/>
        <dbReference type="ChEBI" id="CHEBI:17976"/>
        <dbReference type="ChEBI" id="CHEBI:57540"/>
        <dbReference type="ChEBI" id="CHEBI:57945"/>
        <dbReference type="EC" id="7.1.1.2"/>
    </reaction>
</comment>
<comment type="subcellular location">
    <subcellularLocation>
        <location>Mitochondrion inner membrane</location>
        <topology>Multi-pass membrane protein</topology>
    </subcellularLocation>
</comment>
<comment type="similarity">
    <text evidence="3">Belongs to the complex I subunit 2 family.</text>
</comment>
<sequence length="136" mass="15331">MIEESKENSLKYFLIQSVASVIFLASILNQSFSFLIPFALLIKIGAAPFHMWLVSISKSMSWKVLSLLMTFQKIGPLLGLAMLSSVSHLSWLMVNMSSFLLMLVYYVTYLAILYFAVILLQQTPMYSLAQMNSNAS</sequence>